<name>YJIE_LACLA</name>
<reference key="1">
    <citation type="journal article" date="2001" name="Genome Res.">
        <title>The complete genome sequence of the lactic acid bacterium Lactococcus lactis ssp. lactis IL1403.</title>
        <authorList>
            <person name="Bolotin A."/>
            <person name="Wincker P."/>
            <person name="Mauger S."/>
            <person name="Jaillon O."/>
            <person name="Malarme K."/>
            <person name="Weissenbach J."/>
            <person name="Ehrlich S.D."/>
            <person name="Sorokin A."/>
        </authorList>
    </citation>
    <scope>NUCLEOTIDE SEQUENCE [LARGE SCALE GENOMIC DNA]</scope>
    <source>
        <strain>IL1403</strain>
    </source>
</reference>
<sequence length="295" mass="33591">MENKLNIVIITGMSGAGKTVAIQSFEDMGYFTVDNMPPNLIEKFVGLLNTPDNKIDKVALVVDMRSRAFFEDIQSIVTELTDNGSVNFKLLFLDANDTELVSRYKETRRSHPLAIDGRTLDGITKEREILADLKNLSEVVIDTSELTPRNLRARILQKFASSTESTFRIEVMSFGFKYGLPLDADLVFDVRFLPNPHYITELRDKNGTDKEVYDYVMEHPQSEEFYENLMKMLVPILPAYKKEGKSVLTIAFGCTGGQHRSVAFAERVSAALKDKWHLNVSHRDKDRRKETVNRS</sequence>
<proteinExistence type="inferred from homology"/>
<gene>
    <name type="primary">yjiE</name>
    <name type="ordered locus">LL0961</name>
    <name type="ORF">L188550</name>
</gene>
<keyword id="KW-0067">ATP-binding</keyword>
<keyword id="KW-0342">GTP-binding</keyword>
<keyword id="KW-0547">Nucleotide-binding</keyword>
<keyword id="KW-1185">Reference proteome</keyword>
<organism>
    <name type="scientific">Lactococcus lactis subsp. lactis (strain IL1403)</name>
    <name type="common">Streptococcus lactis</name>
    <dbReference type="NCBI Taxonomy" id="272623"/>
    <lineage>
        <taxon>Bacteria</taxon>
        <taxon>Bacillati</taxon>
        <taxon>Bacillota</taxon>
        <taxon>Bacilli</taxon>
        <taxon>Lactobacillales</taxon>
        <taxon>Streptococcaceae</taxon>
        <taxon>Lactococcus</taxon>
    </lineage>
</organism>
<comment type="function">
    <text evidence="1">Displays ATPase and GTPase activities.</text>
</comment>
<comment type="similarity">
    <text evidence="1">Belongs to the RapZ-like family.</text>
</comment>
<evidence type="ECO:0000255" key="1">
    <source>
        <dbReference type="HAMAP-Rule" id="MF_00636"/>
    </source>
</evidence>
<feature type="chain" id="PRO_0000107721" description="Nucleotide-binding protein YjiE">
    <location>
        <begin position="1"/>
        <end position="295"/>
    </location>
</feature>
<feature type="binding site" evidence="1">
    <location>
        <begin position="12"/>
        <end position="19"/>
    </location>
    <ligand>
        <name>ATP</name>
        <dbReference type="ChEBI" id="CHEBI:30616"/>
    </ligand>
</feature>
<feature type="binding site" evidence="1">
    <location>
        <begin position="63"/>
        <end position="66"/>
    </location>
    <ligand>
        <name>GTP</name>
        <dbReference type="ChEBI" id="CHEBI:37565"/>
    </ligand>
</feature>
<dbReference type="EMBL" id="AE005176">
    <property type="protein sequence ID" value="AAK05059.1"/>
    <property type="molecule type" value="Genomic_DNA"/>
</dbReference>
<dbReference type="PIR" id="A86745">
    <property type="entry name" value="A86745"/>
</dbReference>
<dbReference type="RefSeq" id="NP_267117.1">
    <property type="nucleotide sequence ID" value="NC_002662.1"/>
</dbReference>
<dbReference type="SMR" id="Q9CGY1"/>
<dbReference type="PaxDb" id="272623-L188550"/>
<dbReference type="EnsemblBacteria" id="AAK05059">
    <property type="protein sequence ID" value="AAK05059"/>
    <property type="gene ID" value="L188550"/>
</dbReference>
<dbReference type="KEGG" id="lla:L188550"/>
<dbReference type="PATRIC" id="fig|272623.7.peg.1028"/>
<dbReference type="eggNOG" id="COG1660">
    <property type="taxonomic scope" value="Bacteria"/>
</dbReference>
<dbReference type="HOGENOM" id="CLU_059558_0_0_9"/>
<dbReference type="OrthoDB" id="9784461at2"/>
<dbReference type="Proteomes" id="UP000002196">
    <property type="component" value="Chromosome"/>
</dbReference>
<dbReference type="GO" id="GO:0005524">
    <property type="term" value="F:ATP binding"/>
    <property type="evidence" value="ECO:0007669"/>
    <property type="project" value="UniProtKB-UniRule"/>
</dbReference>
<dbReference type="GO" id="GO:0005525">
    <property type="term" value="F:GTP binding"/>
    <property type="evidence" value="ECO:0007669"/>
    <property type="project" value="UniProtKB-UniRule"/>
</dbReference>
<dbReference type="Gene3D" id="3.40.50.300">
    <property type="entry name" value="P-loop containing nucleotide triphosphate hydrolases"/>
    <property type="match status" value="1"/>
</dbReference>
<dbReference type="HAMAP" id="MF_00636">
    <property type="entry name" value="RapZ_like"/>
    <property type="match status" value="1"/>
</dbReference>
<dbReference type="InterPro" id="IPR027417">
    <property type="entry name" value="P-loop_NTPase"/>
</dbReference>
<dbReference type="InterPro" id="IPR005337">
    <property type="entry name" value="RapZ-like"/>
</dbReference>
<dbReference type="InterPro" id="IPR053930">
    <property type="entry name" value="RapZ-like_N"/>
</dbReference>
<dbReference type="InterPro" id="IPR053931">
    <property type="entry name" value="RapZ_C"/>
</dbReference>
<dbReference type="NCBIfam" id="NF003828">
    <property type="entry name" value="PRK05416.1"/>
    <property type="match status" value="1"/>
</dbReference>
<dbReference type="PANTHER" id="PTHR30448">
    <property type="entry name" value="RNASE ADAPTER PROTEIN RAPZ"/>
    <property type="match status" value="1"/>
</dbReference>
<dbReference type="PANTHER" id="PTHR30448:SF0">
    <property type="entry name" value="RNASE ADAPTER PROTEIN RAPZ"/>
    <property type="match status" value="1"/>
</dbReference>
<dbReference type="Pfam" id="PF22740">
    <property type="entry name" value="PapZ_C"/>
    <property type="match status" value="1"/>
</dbReference>
<dbReference type="Pfam" id="PF03668">
    <property type="entry name" value="RapZ-like_N"/>
    <property type="match status" value="1"/>
</dbReference>
<dbReference type="PIRSF" id="PIRSF005052">
    <property type="entry name" value="P-loopkin"/>
    <property type="match status" value="1"/>
</dbReference>
<dbReference type="SUPFAM" id="SSF52540">
    <property type="entry name" value="P-loop containing nucleoside triphosphate hydrolases"/>
    <property type="match status" value="1"/>
</dbReference>
<protein>
    <recommendedName>
        <fullName evidence="1">Nucleotide-binding protein YjiE</fullName>
    </recommendedName>
</protein>
<accession>Q9CGY1</accession>